<keyword id="KW-0963">Cytoplasm</keyword>
<keyword id="KW-0570">Pentose shunt</keyword>
<keyword id="KW-1185">Reference proteome</keyword>
<keyword id="KW-0704">Schiff base</keyword>
<keyword id="KW-0808">Transferase</keyword>
<reference key="1">
    <citation type="submission" date="2005-09" db="EMBL/GenBank/DDBJ databases">
        <title>Complete sequence of chromosome 1 of Rhodobacter sphaeroides 2.4.1.</title>
        <authorList>
            <person name="Copeland A."/>
            <person name="Lucas S."/>
            <person name="Lapidus A."/>
            <person name="Barry K."/>
            <person name="Detter J.C."/>
            <person name="Glavina T."/>
            <person name="Hammon N."/>
            <person name="Israni S."/>
            <person name="Pitluck S."/>
            <person name="Richardson P."/>
            <person name="Mackenzie C."/>
            <person name="Choudhary M."/>
            <person name="Larimer F."/>
            <person name="Hauser L.J."/>
            <person name="Land M."/>
            <person name="Donohue T.J."/>
            <person name="Kaplan S."/>
        </authorList>
    </citation>
    <scope>NUCLEOTIDE SEQUENCE [LARGE SCALE GENOMIC DNA]</scope>
    <source>
        <strain>ATCC 17023 / DSM 158 / JCM 6121 / CCUG 31486 / LMG 2827 / NBRC 12203 / NCIMB 8253 / ATH 2.4.1.</strain>
    </source>
</reference>
<dbReference type="EC" id="2.2.1.2" evidence="1"/>
<dbReference type="EMBL" id="CP000143">
    <property type="protein sequence ID" value="ABA79734.1"/>
    <property type="molecule type" value="Genomic_DNA"/>
</dbReference>
<dbReference type="RefSeq" id="YP_353635.1">
    <property type="nucleotide sequence ID" value="NC_007493.2"/>
</dbReference>
<dbReference type="SMR" id="Q3J0F0"/>
<dbReference type="STRING" id="272943.RSP_0561"/>
<dbReference type="EnsemblBacteria" id="ABA79734">
    <property type="protein sequence ID" value="ABA79734"/>
    <property type="gene ID" value="RSP_0561"/>
</dbReference>
<dbReference type="KEGG" id="rsp:RSP_0561"/>
<dbReference type="PATRIC" id="fig|272943.9.peg.2512"/>
<dbReference type="eggNOG" id="COG0176">
    <property type="taxonomic scope" value="Bacteria"/>
</dbReference>
<dbReference type="OrthoDB" id="9807051at2"/>
<dbReference type="PhylomeDB" id="Q3J0F0"/>
<dbReference type="UniPathway" id="UPA00115">
    <property type="reaction ID" value="UER00414"/>
</dbReference>
<dbReference type="Proteomes" id="UP000002703">
    <property type="component" value="Chromosome 1"/>
</dbReference>
<dbReference type="GO" id="GO:0005737">
    <property type="term" value="C:cytoplasm"/>
    <property type="evidence" value="ECO:0007669"/>
    <property type="project" value="UniProtKB-SubCell"/>
</dbReference>
<dbReference type="GO" id="GO:0016832">
    <property type="term" value="F:aldehyde-lyase activity"/>
    <property type="evidence" value="ECO:0007669"/>
    <property type="project" value="InterPro"/>
</dbReference>
<dbReference type="GO" id="GO:0004801">
    <property type="term" value="F:transaldolase activity"/>
    <property type="evidence" value="ECO:0007669"/>
    <property type="project" value="UniProtKB-UniRule"/>
</dbReference>
<dbReference type="GO" id="GO:0005975">
    <property type="term" value="P:carbohydrate metabolic process"/>
    <property type="evidence" value="ECO:0007669"/>
    <property type="project" value="InterPro"/>
</dbReference>
<dbReference type="GO" id="GO:0006098">
    <property type="term" value="P:pentose-phosphate shunt"/>
    <property type="evidence" value="ECO:0007669"/>
    <property type="project" value="UniProtKB-UniRule"/>
</dbReference>
<dbReference type="CDD" id="cd00956">
    <property type="entry name" value="Transaldolase_FSA"/>
    <property type="match status" value="1"/>
</dbReference>
<dbReference type="FunFam" id="3.20.20.70:FF:000018">
    <property type="entry name" value="Probable transaldolase"/>
    <property type="match status" value="1"/>
</dbReference>
<dbReference type="Gene3D" id="3.20.20.70">
    <property type="entry name" value="Aldolase class I"/>
    <property type="match status" value="1"/>
</dbReference>
<dbReference type="HAMAP" id="MF_00494">
    <property type="entry name" value="Transaldolase_3b"/>
    <property type="match status" value="1"/>
</dbReference>
<dbReference type="InterPro" id="IPR013785">
    <property type="entry name" value="Aldolase_TIM"/>
</dbReference>
<dbReference type="InterPro" id="IPR001585">
    <property type="entry name" value="TAL/FSA"/>
</dbReference>
<dbReference type="InterPro" id="IPR022999">
    <property type="entry name" value="Transaldolase_3B"/>
</dbReference>
<dbReference type="InterPro" id="IPR004731">
    <property type="entry name" value="Transaldolase_3B/F6P_aldolase"/>
</dbReference>
<dbReference type="InterPro" id="IPR018225">
    <property type="entry name" value="Transaldolase_AS"/>
</dbReference>
<dbReference type="InterPro" id="IPR033919">
    <property type="entry name" value="TSA/FSA_arc/bac"/>
</dbReference>
<dbReference type="NCBIfam" id="TIGR00875">
    <property type="entry name" value="fsa_talC_mipB"/>
    <property type="match status" value="1"/>
</dbReference>
<dbReference type="PANTHER" id="PTHR10683:SF40">
    <property type="entry name" value="FRUCTOSE-6-PHOSPHATE ALDOLASE 1-RELATED"/>
    <property type="match status" value="1"/>
</dbReference>
<dbReference type="PANTHER" id="PTHR10683">
    <property type="entry name" value="TRANSALDOLASE"/>
    <property type="match status" value="1"/>
</dbReference>
<dbReference type="Pfam" id="PF00923">
    <property type="entry name" value="TAL_FSA"/>
    <property type="match status" value="1"/>
</dbReference>
<dbReference type="SUPFAM" id="SSF51569">
    <property type="entry name" value="Aldolase"/>
    <property type="match status" value="1"/>
</dbReference>
<dbReference type="PROSITE" id="PS01054">
    <property type="entry name" value="TRANSALDOLASE_1"/>
    <property type="match status" value="1"/>
</dbReference>
<dbReference type="PROSITE" id="PS00958">
    <property type="entry name" value="TRANSALDOLASE_2"/>
    <property type="match status" value="1"/>
</dbReference>
<evidence type="ECO:0000255" key="1">
    <source>
        <dbReference type="HAMAP-Rule" id="MF_00494"/>
    </source>
</evidence>
<accession>Q3J0F0</accession>
<gene>
    <name evidence="1" type="primary">tal</name>
    <name type="ordered locus">RHOS4_21660</name>
    <name type="ORF">RSP_0561</name>
</gene>
<protein>
    <recommendedName>
        <fullName evidence="1">Probable transaldolase</fullName>
        <ecNumber evidence="1">2.2.1.2</ecNumber>
    </recommendedName>
</protein>
<organism>
    <name type="scientific">Cereibacter sphaeroides (strain ATCC 17023 / DSM 158 / JCM 6121 / CCUG 31486 / LMG 2827 / NBRC 12203 / NCIMB 8253 / ATH 2.4.1.)</name>
    <name type="common">Rhodobacter sphaeroides</name>
    <dbReference type="NCBI Taxonomy" id="272943"/>
    <lineage>
        <taxon>Bacteria</taxon>
        <taxon>Pseudomonadati</taxon>
        <taxon>Pseudomonadota</taxon>
        <taxon>Alphaproteobacteria</taxon>
        <taxon>Rhodobacterales</taxon>
        <taxon>Paracoccaceae</taxon>
        <taxon>Cereibacter</taxon>
    </lineage>
</organism>
<proteinExistence type="inferred from homology"/>
<comment type="function">
    <text evidence="1">Transaldolase is important for the balance of metabolites in the pentose-phosphate pathway.</text>
</comment>
<comment type="catalytic activity">
    <reaction evidence="1">
        <text>D-sedoheptulose 7-phosphate + D-glyceraldehyde 3-phosphate = D-erythrose 4-phosphate + beta-D-fructose 6-phosphate</text>
        <dbReference type="Rhea" id="RHEA:17053"/>
        <dbReference type="ChEBI" id="CHEBI:16897"/>
        <dbReference type="ChEBI" id="CHEBI:57483"/>
        <dbReference type="ChEBI" id="CHEBI:57634"/>
        <dbReference type="ChEBI" id="CHEBI:59776"/>
        <dbReference type="EC" id="2.2.1.2"/>
    </reaction>
</comment>
<comment type="pathway">
    <text evidence="1">Carbohydrate degradation; pentose phosphate pathway; D-glyceraldehyde 3-phosphate and beta-D-fructose 6-phosphate from D-ribose 5-phosphate and D-xylulose 5-phosphate (non-oxidative stage): step 2/3.</text>
</comment>
<comment type="subcellular location">
    <subcellularLocation>
        <location evidence="1">Cytoplasm</location>
    </subcellularLocation>
</comment>
<comment type="similarity">
    <text evidence="1">Belongs to the transaldolase family. Type 3B subfamily.</text>
</comment>
<feature type="chain" id="PRO_1000126349" description="Probable transaldolase">
    <location>
        <begin position="1"/>
        <end position="219"/>
    </location>
</feature>
<feature type="active site" description="Schiff-base intermediate with substrate" evidence="1">
    <location>
        <position position="83"/>
    </location>
</feature>
<name>TAL_CERS4</name>
<sequence>MKFFVDSADVAAIAELNALGMVDGVTTNPSLILKSGRNILEVTKEICNLVSGPVSAEVVAAKAEDMIEEGRHLAEIAPNIAVKVPLTWDGLRACKVLSDEGRMVNVTLCFSVNQALLAAKAGATFISPFIGRLDDINLDGMELIADIRQVYDNYDFKTEVLAASVRTPNHVADCARIGADVITAPPAVIKALANHVLTDKGLDMFNADWAKTGQSILLK</sequence>